<sequence>MLLKSYVFFLLSLLIVGLFTSRDADAQYEDLVTGYLRKGGVSGVSDFEPIEVFGEDYDSDEADEDGKG</sequence>
<dbReference type="EMBL" id="EU147264">
    <property type="protein sequence ID" value="ABX80081.1"/>
    <property type="molecule type" value="mRNA"/>
</dbReference>
<dbReference type="GO" id="GO:0005576">
    <property type="term" value="C:extracellular region"/>
    <property type="evidence" value="ECO:0007669"/>
    <property type="project" value="UniProtKB-SubCell"/>
</dbReference>
<organism>
    <name type="scientific">Tabanus yao</name>
    <name type="common">Horsefly</name>
    <dbReference type="NCBI Taxonomy" id="485572"/>
    <lineage>
        <taxon>Eukaryota</taxon>
        <taxon>Metazoa</taxon>
        <taxon>Ecdysozoa</taxon>
        <taxon>Arthropoda</taxon>
        <taxon>Hexapoda</taxon>
        <taxon>Insecta</taxon>
        <taxon>Pterygota</taxon>
        <taxon>Neoptera</taxon>
        <taxon>Endopterygota</taxon>
        <taxon>Diptera</taxon>
        <taxon>Brachycera</taxon>
        <taxon>Tabanomorpha</taxon>
        <taxon>Tabanoidea</taxon>
        <taxon>Tabanidae</taxon>
        <taxon>Tabanus</taxon>
    </lineage>
</organism>
<feature type="signal peptide" evidence="1">
    <location>
        <begin position="1"/>
        <end position="26"/>
    </location>
</feature>
<feature type="propeptide" id="PRO_0000456097" evidence="4">
    <location>
        <begin position="27"/>
        <end position="38"/>
    </location>
</feature>
<feature type="peptide" id="PRO_5002908986" description="Tabimmunregulin 1" evidence="2">
    <location>
        <begin position="39"/>
        <end position="68"/>
    </location>
</feature>
<comment type="function">
    <text evidence="2">Horsefly salivary gland immunosuppressant protein that likely inhibits the host inflammatory response by regulation of anti- and pro-inflammatory cytokines (PubMed:18087067). When tested on mouse splenocytes in the presence of LPS, it increases the secretion of the proinflammatory cytokine interleukin-10 (IL10) and decreases the secretion of the proinflammatory cytokine interferon-gamma (IFNG) in a dose-dependent manner (PubMed:18087067).</text>
</comment>
<comment type="subcellular location">
    <subcellularLocation>
        <location evidence="2">Secreted</location>
    </subcellularLocation>
</comment>
<comment type="tissue specificity">
    <text evidence="4">Expressed in salivary glands.</text>
</comment>
<accession>C1IBZ3</accession>
<name>IMM1_TABYA</name>
<keyword id="KW-0165">Cleavage on pair of basic residues</keyword>
<keyword id="KW-0903">Direct protein sequencing</keyword>
<keyword id="KW-0964">Secreted</keyword>
<keyword id="KW-0732">Signal</keyword>
<evidence type="ECO:0000255" key="1"/>
<evidence type="ECO:0000269" key="2">
    <source>
    </source>
</evidence>
<evidence type="ECO:0000303" key="3">
    <source>
    </source>
</evidence>
<evidence type="ECO:0000305" key="4">
    <source>
    </source>
</evidence>
<evidence type="ECO:0000312" key="5">
    <source>
        <dbReference type="EMBL" id="ABX80081.1"/>
    </source>
</evidence>
<protein>
    <recommendedName>
        <fullName evidence="3">Tabimmunregulin 1</fullName>
    </recommendedName>
</protein>
<reference evidence="5" key="1">
    <citation type="journal article" date="2008" name="Mol. Cell. Proteomics">
        <title>Toward an understanding of the molecular mechanism for successful blood feeding by coupling proteomics analysis with pharmacological testing of horsefly salivary glands.</title>
        <authorList>
            <person name="Xu X."/>
            <person name="Yang H."/>
            <person name="Ma D."/>
            <person name="Wu J."/>
            <person name="Wang Y."/>
            <person name="Song Y."/>
            <person name="Wang X."/>
            <person name="Lu Y."/>
            <person name="Yang J."/>
            <person name="Lai R."/>
        </authorList>
    </citation>
    <scope>NUCLEOTIDE SEQUENCE [MRNA]</scope>
    <scope>PROTEIN SEQUENCE OF 39-68</scope>
    <scope>SUBCELLULAR LOCATION</scope>
    <scope>FUNCTION</scope>
    <source>
        <tissue>Salivary gland</tissue>
    </source>
</reference>
<proteinExistence type="evidence at protein level"/>